<feature type="chain" id="PRO_1000067445" description="C4-dicarboxylate transport protein">
    <location>
        <begin position="1"/>
        <end position="428"/>
    </location>
</feature>
<feature type="transmembrane region" description="Helical" evidence="1">
    <location>
        <begin position="8"/>
        <end position="28"/>
    </location>
</feature>
<feature type="transmembrane region" description="Helical" evidence="1">
    <location>
        <begin position="44"/>
        <end position="64"/>
    </location>
</feature>
<feature type="transmembrane region" description="Helical" evidence="1">
    <location>
        <begin position="76"/>
        <end position="96"/>
    </location>
</feature>
<feature type="transmembrane region" description="Helical" evidence="1">
    <location>
        <begin position="142"/>
        <end position="162"/>
    </location>
</feature>
<feature type="transmembrane region" description="Helical" evidence="1">
    <location>
        <begin position="184"/>
        <end position="204"/>
    </location>
</feature>
<feature type="transmembrane region" description="Helical" evidence="1">
    <location>
        <begin position="222"/>
        <end position="242"/>
    </location>
</feature>
<feature type="transmembrane region" description="Helical" evidence="1">
    <location>
        <begin position="326"/>
        <end position="346"/>
    </location>
</feature>
<feature type="transmembrane region" description="Helical" evidence="1">
    <location>
        <begin position="352"/>
        <end position="372"/>
    </location>
</feature>
<proteinExistence type="inferred from homology"/>
<organism>
    <name type="scientific">Escherichia coli O9:H4 (strain HS)</name>
    <dbReference type="NCBI Taxonomy" id="331112"/>
    <lineage>
        <taxon>Bacteria</taxon>
        <taxon>Pseudomonadati</taxon>
        <taxon>Pseudomonadota</taxon>
        <taxon>Gammaproteobacteria</taxon>
        <taxon>Enterobacterales</taxon>
        <taxon>Enterobacteriaceae</taxon>
        <taxon>Escherichia</taxon>
    </lineage>
</organism>
<protein>
    <recommendedName>
        <fullName evidence="1">C4-dicarboxylate transport protein</fullName>
    </recommendedName>
</protein>
<keyword id="KW-0997">Cell inner membrane</keyword>
<keyword id="KW-1003">Cell membrane</keyword>
<keyword id="KW-0472">Membrane</keyword>
<keyword id="KW-0769">Symport</keyword>
<keyword id="KW-0812">Transmembrane</keyword>
<keyword id="KW-1133">Transmembrane helix</keyword>
<keyword id="KW-0813">Transport</keyword>
<comment type="function">
    <text evidence="1">Responsible for the transport of dicarboxylates such as succinate, fumarate, and malate from the periplasm across the membrane.</text>
</comment>
<comment type="subcellular location">
    <subcellularLocation>
        <location evidence="1">Cell inner membrane</location>
        <topology evidence="1">Multi-pass membrane protein</topology>
    </subcellularLocation>
</comment>
<comment type="similarity">
    <text evidence="1">Belongs to the dicarboxylate/amino acid:cation symporter (DAACS) (TC 2.A.23) family.</text>
</comment>
<dbReference type="EMBL" id="CP000802">
    <property type="protein sequence ID" value="ABV07942.1"/>
    <property type="molecule type" value="Genomic_DNA"/>
</dbReference>
<dbReference type="RefSeq" id="WP_000858214.1">
    <property type="nucleotide sequence ID" value="NC_009800.1"/>
</dbReference>
<dbReference type="SMR" id="A8A5Y8"/>
<dbReference type="GeneID" id="93778248"/>
<dbReference type="KEGG" id="ecx:EcHS_A3731"/>
<dbReference type="HOGENOM" id="CLU_019375_7_0_6"/>
<dbReference type="GO" id="GO:0005886">
    <property type="term" value="C:plasma membrane"/>
    <property type="evidence" value="ECO:0007669"/>
    <property type="project" value="UniProtKB-SubCell"/>
</dbReference>
<dbReference type="GO" id="GO:0015138">
    <property type="term" value="F:fumarate transmembrane transporter activity"/>
    <property type="evidence" value="ECO:0007669"/>
    <property type="project" value="TreeGrafter"/>
</dbReference>
<dbReference type="GO" id="GO:0015366">
    <property type="term" value="F:malate:proton symporter activity"/>
    <property type="evidence" value="ECO:0007669"/>
    <property type="project" value="TreeGrafter"/>
</dbReference>
<dbReference type="GO" id="GO:0015141">
    <property type="term" value="F:succinate transmembrane transporter activity"/>
    <property type="evidence" value="ECO:0007669"/>
    <property type="project" value="TreeGrafter"/>
</dbReference>
<dbReference type="GO" id="GO:0070778">
    <property type="term" value="P:L-aspartate transmembrane transport"/>
    <property type="evidence" value="ECO:0007669"/>
    <property type="project" value="TreeGrafter"/>
</dbReference>
<dbReference type="FunFam" id="1.10.3860.10:FF:000001">
    <property type="entry name" value="C4-dicarboxylate transport protein"/>
    <property type="match status" value="1"/>
</dbReference>
<dbReference type="Gene3D" id="1.10.3860.10">
    <property type="entry name" value="Sodium:dicarboxylate symporter"/>
    <property type="match status" value="1"/>
</dbReference>
<dbReference type="HAMAP" id="MF_01300">
    <property type="entry name" value="C4_dicarb_transport"/>
    <property type="match status" value="1"/>
</dbReference>
<dbReference type="InterPro" id="IPR023954">
    <property type="entry name" value="C4_dicarb_transport"/>
</dbReference>
<dbReference type="InterPro" id="IPR001991">
    <property type="entry name" value="Na-dicarboxylate_symporter"/>
</dbReference>
<dbReference type="InterPro" id="IPR018107">
    <property type="entry name" value="Na-dicarboxylate_symporter_CS"/>
</dbReference>
<dbReference type="InterPro" id="IPR036458">
    <property type="entry name" value="Na:dicarbo_symporter_sf"/>
</dbReference>
<dbReference type="NCBIfam" id="NF002461">
    <property type="entry name" value="PRK01663.1"/>
    <property type="match status" value="1"/>
</dbReference>
<dbReference type="NCBIfam" id="NF009587">
    <property type="entry name" value="PRK13027.1"/>
    <property type="match status" value="1"/>
</dbReference>
<dbReference type="PANTHER" id="PTHR42865:SF1">
    <property type="entry name" value="AEROBIC C4-DICARBOXYLATE TRANSPORT PROTEIN"/>
    <property type="match status" value="1"/>
</dbReference>
<dbReference type="PANTHER" id="PTHR42865">
    <property type="entry name" value="PROTON/GLUTAMATE-ASPARTATE SYMPORTER"/>
    <property type="match status" value="1"/>
</dbReference>
<dbReference type="Pfam" id="PF00375">
    <property type="entry name" value="SDF"/>
    <property type="match status" value="1"/>
</dbReference>
<dbReference type="PRINTS" id="PR00173">
    <property type="entry name" value="EDTRNSPORT"/>
</dbReference>
<dbReference type="SUPFAM" id="SSF118215">
    <property type="entry name" value="Proton glutamate symport protein"/>
    <property type="match status" value="1"/>
</dbReference>
<dbReference type="PROSITE" id="PS00713">
    <property type="entry name" value="NA_DICARBOXYL_SYMP_1"/>
    <property type="match status" value="1"/>
</dbReference>
<dbReference type="PROSITE" id="PS00714">
    <property type="entry name" value="NA_DICARBOXYL_SYMP_2"/>
    <property type="match status" value="1"/>
</dbReference>
<sequence length="428" mass="45436">MKTSLFKSLYFQVLTAIAIGILLGHFYPEIGEQMKPLGDGFVKLIKMIIAPVIFCTVVTGIAGMESMKAVGRTGAVALLYFEIVSTIALIIGLIIVNVVQPGAGMNVDPATLDAKAVAVYADQAKDQGIVAFIMDVIPASVIGAFASGNILQVLLFAVLFGFALHRLGSKGQLIFNVIESFSQVIFGIINMIMRLAPIGAFGAMAFTIGKYGVGTLVQLGQLIICFYITCILFVVLVLGSIAKATGFSIFKFIRYIREELLIVLGTSSSESALPRMLDKMEKLGCRKSVVGLVIPTGYSFNLDGTSIYLTMAAVFIAQATNSQMDIVHQITLLIVLLLSSKGAAGVTGSGFIVLAATLSAVGHLPVAGLALILGIDRFMSEARALTNLVGNGVATIVVAKWVKELDHKKLDDVLNNRAPDGKTHELSS</sequence>
<accession>A8A5Y8</accession>
<gene>
    <name evidence="1" type="primary">dctA</name>
    <name type="ordered locus">EcHS_A3731</name>
</gene>
<evidence type="ECO:0000255" key="1">
    <source>
        <dbReference type="HAMAP-Rule" id="MF_01300"/>
    </source>
</evidence>
<name>DCTA_ECOHS</name>
<reference key="1">
    <citation type="journal article" date="2008" name="J. Bacteriol.">
        <title>The pangenome structure of Escherichia coli: comparative genomic analysis of E. coli commensal and pathogenic isolates.</title>
        <authorList>
            <person name="Rasko D.A."/>
            <person name="Rosovitz M.J."/>
            <person name="Myers G.S.A."/>
            <person name="Mongodin E.F."/>
            <person name="Fricke W.F."/>
            <person name="Gajer P."/>
            <person name="Crabtree J."/>
            <person name="Sebaihia M."/>
            <person name="Thomson N.R."/>
            <person name="Chaudhuri R."/>
            <person name="Henderson I.R."/>
            <person name="Sperandio V."/>
            <person name="Ravel J."/>
        </authorList>
    </citation>
    <scope>NUCLEOTIDE SEQUENCE [LARGE SCALE GENOMIC DNA]</scope>
    <source>
        <strain>HS</strain>
    </source>
</reference>